<reference key="1">
    <citation type="journal article" date="1997" name="Plant J.">
        <title>Identification of members of gene families in Arabidopsis thaliana by contig construction from partial cDNA sequences: 106 genes encoding 50 cytoplasmic ribosomal proteins.</title>
        <authorList>
            <person name="Cooke R."/>
            <person name="Raynal M."/>
            <person name="Laudie M."/>
            <person name="Delseny M."/>
        </authorList>
    </citation>
    <scope>NUCLEOTIDE SEQUENCE [MRNA]</scope>
    <source>
        <strain>cv. Columbia</strain>
        <tissue>Silique</tissue>
    </source>
</reference>
<reference key="2">
    <citation type="journal article" date="2000" name="Nature">
        <title>Sequence and analysis of chromosome 1 of the plant Arabidopsis thaliana.</title>
        <authorList>
            <person name="Theologis A."/>
            <person name="Ecker J.R."/>
            <person name="Palm C.J."/>
            <person name="Federspiel N.A."/>
            <person name="Kaul S."/>
            <person name="White O."/>
            <person name="Alonso J."/>
            <person name="Altafi H."/>
            <person name="Araujo R."/>
            <person name="Bowman C.L."/>
            <person name="Brooks S.Y."/>
            <person name="Buehler E."/>
            <person name="Chan A."/>
            <person name="Chao Q."/>
            <person name="Chen H."/>
            <person name="Cheuk R.F."/>
            <person name="Chin C.W."/>
            <person name="Chung M.K."/>
            <person name="Conn L."/>
            <person name="Conway A.B."/>
            <person name="Conway A.R."/>
            <person name="Creasy T.H."/>
            <person name="Dewar K."/>
            <person name="Dunn P."/>
            <person name="Etgu P."/>
            <person name="Feldblyum T.V."/>
            <person name="Feng J.-D."/>
            <person name="Fong B."/>
            <person name="Fujii C.Y."/>
            <person name="Gill J.E."/>
            <person name="Goldsmith A.D."/>
            <person name="Haas B."/>
            <person name="Hansen N.F."/>
            <person name="Hughes B."/>
            <person name="Huizar L."/>
            <person name="Hunter J.L."/>
            <person name="Jenkins J."/>
            <person name="Johnson-Hopson C."/>
            <person name="Khan S."/>
            <person name="Khaykin E."/>
            <person name="Kim C.J."/>
            <person name="Koo H.L."/>
            <person name="Kremenetskaia I."/>
            <person name="Kurtz D.B."/>
            <person name="Kwan A."/>
            <person name="Lam B."/>
            <person name="Langin-Hooper S."/>
            <person name="Lee A."/>
            <person name="Lee J.M."/>
            <person name="Lenz C.A."/>
            <person name="Li J.H."/>
            <person name="Li Y.-P."/>
            <person name="Lin X."/>
            <person name="Liu S.X."/>
            <person name="Liu Z.A."/>
            <person name="Luros J.S."/>
            <person name="Maiti R."/>
            <person name="Marziali A."/>
            <person name="Militscher J."/>
            <person name="Miranda M."/>
            <person name="Nguyen M."/>
            <person name="Nierman W.C."/>
            <person name="Osborne B.I."/>
            <person name="Pai G."/>
            <person name="Peterson J."/>
            <person name="Pham P.K."/>
            <person name="Rizzo M."/>
            <person name="Rooney T."/>
            <person name="Rowley D."/>
            <person name="Sakano H."/>
            <person name="Salzberg S.L."/>
            <person name="Schwartz J.R."/>
            <person name="Shinn P."/>
            <person name="Southwick A.M."/>
            <person name="Sun H."/>
            <person name="Tallon L.J."/>
            <person name="Tambunga G."/>
            <person name="Toriumi M.J."/>
            <person name="Town C.D."/>
            <person name="Utterback T."/>
            <person name="Van Aken S."/>
            <person name="Vaysberg M."/>
            <person name="Vysotskaia V.S."/>
            <person name="Walker M."/>
            <person name="Wu D."/>
            <person name="Yu G."/>
            <person name="Fraser C.M."/>
            <person name="Venter J.C."/>
            <person name="Davis R.W."/>
        </authorList>
    </citation>
    <scope>NUCLEOTIDE SEQUENCE [LARGE SCALE GENOMIC DNA]</scope>
    <source>
        <strain>cv. Columbia</strain>
    </source>
</reference>
<reference key="3">
    <citation type="journal article" date="2017" name="Plant J.">
        <title>Araport11: a complete reannotation of the Arabidopsis thaliana reference genome.</title>
        <authorList>
            <person name="Cheng C.Y."/>
            <person name="Krishnakumar V."/>
            <person name="Chan A.P."/>
            <person name="Thibaud-Nissen F."/>
            <person name="Schobel S."/>
            <person name="Town C.D."/>
        </authorList>
    </citation>
    <scope>GENOME REANNOTATION</scope>
    <source>
        <strain>cv. Columbia</strain>
    </source>
</reference>
<reference key="4">
    <citation type="journal article" date="2003" name="Science">
        <title>Empirical analysis of transcriptional activity in the Arabidopsis genome.</title>
        <authorList>
            <person name="Yamada K."/>
            <person name="Lim J."/>
            <person name="Dale J.M."/>
            <person name="Chen H."/>
            <person name="Shinn P."/>
            <person name="Palm C.J."/>
            <person name="Southwick A.M."/>
            <person name="Wu H.C."/>
            <person name="Kim C.J."/>
            <person name="Nguyen M."/>
            <person name="Pham P.K."/>
            <person name="Cheuk R.F."/>
            <person name="Karlin-Newmann G."/>
            <person name="Liu S.X."/>
            <person name="Lam B."/>
            <person name="Sakano H."/>
            <person name="Wu T."/>
            <person name="Yu G."/>
            <person name="Miranda M."/>
            <person name="Quach H.L."/>
            <person name="Tripp M."/>
            <person name="Chang C.H."/>
            <person name="Lee J.M."/>
            <person name="Toriumi M.J."/>
            <person name="Chan M.M."/>
            <person name="Tang C.C."/>
            <person name="Onodera C.S."/>
            <person name="Deng J.M."/>
            <person name="Akiyama K."/>
            <person name="Ansari Y."/>
            <person name="Arakawa T."/>
            <person name="Banh J."/>
            <person name="Banno F."/>
            <person name="Bowser L."/>
            <person name="Brooks S.Y."/>
            <person name="Carninci P."/>
            <person name="Chao Q."/>
            <person name="Choy N."/>
            <person name="Enju A."/>
            <person name="Goldsmith A.D."/>
            <person name="Gurjal M."/>
            <person name="Hansen N.F."/>
            <person name="Hayashizaki Y."/>
            <person name="Johnson-Hopson C."/>
            <person name="Hsuan V.W."/>
            <person name="Iida K."/>
            <person name="Karnes M."/>
            <person name="Khan S."/>
            <person name="Koesema E."/>
            <person name="Ishida J."/>
            <person name="Jiang P.X."/>
            <person name="Jones T."/>
            <person name="Kawai J."/>
            <person name="Kamiya A."/>
            <person name="Meyers C."/>
            <person name="Nakajima M."/>
            <person name="Narusaka M."/>
            <person name="Seki M."/>
            <person name="Sakurai T."/>
            <person name="Satou M."/>
            <person name="Tamse R."/>
            <person name="Vaysberg M."/>
            <person name="Wallender E.K."/>
            <person name="Wong C."/>
            <person name="Yamamura Y."/>
            <person name="Yuan S."/>
            <person name="Shinozaki K."/>
            <person name="Davis R.W."/>
            <person name="Theologis A."/>
            <person name="Ecker J.R."/>
        </authorList>
    </citation>
    <scope>NUCLEOTIDE SEQUENCE [LARGE SCALE MRNA]</scope>
    <source>
        <strain>cv. Columbia</strain>
    </source>
</reference>
<reference key="5">
    <citation type="submission" date="2002-03" db="EMBL/GenBank/DDBJ databases">
        <title>Full-length cDNA from Arabidopsis thaliana.</title>
        <authorList>
            <person name="Brover V.V."/>
            <person name="Troukhan M.E."/>
            <person name="Alexandrov N.A."/>
            <person name="Lu Y.-P."/>
            <person name="Flavell R.B."/>
            <person name="Feldmann K.A."/>
        </authorList>
    </citation>
    <scope>NUCLEOTIDE SEQUENCE [LARGE SCALE MRNA]</scope>
</reference>
<reference key="6">
    <citation type="journal article" date="1993" name="Plant J.">
        <title>An inventory of 1152 expressed sequence tags obtained by partial sequencing of cDNAs from Arabidopsis thaliana.</title>
        <authorList>
            <person name="Hoefte H."/>
            <person name="Desprez T."/>
            <person name="Amselem J."/>
            <person name="Chiapello H."/>
            <person name="Rouze P."/>
            <person name="Caboche M."/>
            <person name="Moisan A."/>
            <person name="Jourjon M.-F."/>
            <person name="Charpenteau J.-L."/>
            <person name="Berthomieu P."/>
            <person name="Guerrier D."/>
            <person name="Giraudat J."/>
            <person name="Quigley F."/>
            <person name="Thomas F."/>
            <person name="Yu D.-Y."/>
            <person name="Mache R."/>
            <person name="Raynal M."/>
            <person name="Cooke R."/>
            <person name="Grellet F."/>
            <person name="Delseny M."/>
            <person name="Parmentier Y."/>
            <person name="de Marcillac G."/>
            <person name="Gigot C."/>
            <person name="Fleck J."/>
            <person name="Philipps G."/>
            <person name="Axelos M."/>
            <person name="Bardet C."/>
            <person name="Tremousaygue D."/>
            <person name="Lescure B."/>
        </authorList>
    </citation>
    <scope>NUCLEOTIDE SEQUENCE [LARGE SCALE MRNA] OF 1-87</scope>
    <source>
        <strain>cv. Columbia</strain>
        <tissue>Green siliques</tissue>
    </source>
</reference>
<reference key="7">
    <citation type="journal article" date="2001" name="Plant Physiol.">
        <title>The organization of cytoplasmic ribosomal protein genes in the Arabidopsis genome.</title>
        <authorList>
            <person name="Barakat A."/>
            <person name="Szick-Miranda K."/>
            <person name="Chang I.-F."/>
            <person name="Guyot R."/>
            <person name="Blanc G."/>
            <person name="Cooke R."/>
            <person name="Delseny M."/>
            <person name="Bailey-Serres J."/>
        </authorList>
    </citation>
    <scope>GENE FAMILY ORGANIZATION</scope>
    <scope>NOMENCLATURE</scope>
</reference>
<reference key="8">
    <citation type="journal article" date="2023" name="Plant Cell">
        <title>An updated nomenclature for plant ribosomal protein genes.</title>
        <authorList>
            <person name="Scarpin M.R."/>
            <person name="Busche M."/>
            <person name="Martinez R.E."/>
            <person name="Harper L.C."/>
            <person name="Reiser L."/>
            <person name="Szakonyi D."/>
            <person name="Merchante C."/>
            <person name="Lan T."/>
            <person name="Xiong W."/>
            <person name="Mo B."/>
            <person name="Tang G."/>
            <person name="Chen X."/>
            <person name="Bailey-Serres J."/>
            <person name="Browning K.S."/>
            <person name="Brunkard J.O."/>
        </authorList>
    </citation>
    <scope>NOMENCLATURE</scope>
</reference>
<feature type="chain" id="PRO_0000104898" description="Large ribosomal subunit protein uL15x">
    <location>
        <begin position="1"/>
        <end position="146"/>
    </location>
</feature>
<feature type="region of interest" description="Disordered" evidence="1">
    <location>
        <begin position="1"/>
        <end position="35"/>
    </location>
</feature>
<feature type="compositionally biased region" description="Basic residues" evidence="1">
    <location>
        <begin position="1"/>
        <end position="14"/>
    </location>
</feature>
<feature type="compositionally biased region" description="Basic residues" evidence="1">
    <location>
        <begin position="21"/>
        <end position="30"/>
    </location>
</feature>
<feature type="sequence conflict" description="In Ref. 5; AAM62795." evidence="3" ref="5">
    <original>D</original>
    <variation>N</variation>
    <location>
        <position position="93"/>
    </location>
</feature>
<sequence length="146" mass="16455">MTTRFKKNRKKRGHVSAGHGRIGKHRKHPGGRGNAGGMHHHRILFDKYHPGYFGKVGMRYFHKLRNKFFCPIVNLDKLWSLVPEDVKAKSTKDNVPLIDVTQHGFFKVLGKGHLPENKPFVVKAKLISKTAEKKIKEAGGAVVLTA</sequence>
<gene>
    <name type="primary">RPL27AC</name>
    <name type="ordered locus">At1g70600</name>
    <name type="ORF">F24J13.17</name>
    <name type="ORF">F5A18.22</name>
</gene>
<protein>
    <recommendedName>
        <fullName evidence="2">Large ribosomal subunit protein uL15x</fullName>
    </recommendedName>
    <alternativeName>
        <fullName>60S ribosomal protein L27a-3</fullName>
    </alternativeName>
</protein>
<name>R27A3_ARATH</name>
<keyword id="KW-1185">Reference proteome</keyword>
<keyword id="KW-0687">Ribonucleoprotein</keyword>
<keyword id="KW-0689">Ribosomal protein</keyword>
<evidence type="ECO:0000256" key="1">
    <source>
        <dbReference type="SAM" id="MobiDB-lite"/>
    </source>
</evidence>
<evidence type="ECO:0000303" key="2">
    <source>
    </source>
</evidence>
<evidence type="ECO:0000305" key="3"/>
<proteinExistence type="evidence at transcript level"/>
<dbReference type="EMBL" id="X91959">
    <property type="protein sequence ID" value="CAA63025.1"/>
    <property type="molecule type" value="mRNA"/>
</dbReference>
<dbReference type="EMBL" id="AC011663">
    <property type="protein sequence ID" value="AAG52338.1"/>
    <property type="molecule type" value="Genomic_DNA"/>
</dbReference>
<dbReference type="EMBL" id="CP002684">
    <property type="protein sequence ID" value="AEE35087.1"/>
    <property type="molecule type" value="Genomic_DNA"/>
</dbReference>
<dbReference type="EMBL" id="AY039519">
    <property type="protein sequence ID" value="AAK62576.1"/>
    <property type="molecule type" value="mRNA"/>
</dbReference>
<dbReference type="EMBL" id="AY048228">
    <property type="protein sequence ID" value="AAK82491.1"/>
    <property type="molecule type" value="mRNA"/>
</dbReference>
<dbReference type="EMBL" id="AY091706">
    <property type="protein sequence ID" value="AAM10305.1"/>
    <property type="molecule type" value="mRNA"/>
</dbReference>
<dbReference type="EMBL" id="AY085573">
    <property type="protein sequence ID" value="AAM62795.1"/>
    <property type="molecule type" value="mRNA"/>
</dbReference>
<dbReference type="EMBL" id="Z17767">
    <property type="protein sequence ID" value="CAA79059.1"/>
    <property type="molecule type" value="mRNA"/>
</dbReference>
<dbReference type="PIR" id="S71256">
    <property type="entry name" value="S71256"/>
</dbReference>
<dbReference type="RefSeq" id="NP_177217.1">
    <property type="nucleotide sequence ID" value="NM_105728.4"/>
</dbReference>
<dbReference type="SMR" id="P49637"/>
<dbReference type="BioGRID" id="28617">
    <property type="interactions" value="8"/>
</dbReference>
<dbReference type="FunCoup" id="P49637">
    <property type="interactions" value="2850"/>
</dbReference>
<dbReference type="STRING" id="3702.P49637"/>
<dbReference type="PaxDb" id="3702-AT1G70600.1"/>
<dbReference type="ProteomicsDB" id="236610"/>
<dbReference type="EnsemblPlants" id="AT1G70600.1">
    <property type="protein sequence ID" value="AT1G70600.1"/>
    <property type="gene ID" value="AT1G70600"/>
</dbReference>
<dbReference type="GeneID" id="843397"/>
<dbReference type="Gramene" id="AT1G70600.1">
    <property type="protein sequence ID" value="AT1G70600.1"/>
    <property type="gene ID" value="AT1G70600"/>
</dbReference>
<dbReference type="KEGG" id="ath:AT1G70600"/>
<dbReference type="Araport" id="AT1G70600"/>
<dbReference type="TAIR" id="AT1G70600"/>
<dbReference type="eggNOG" id="KOG1742">
    <property type="taxonomic scope" value="Eukaryota"/>
</dbReference>
<dbReference type="HOGENOM" id="CLU_109163_1_0_1"/>
<dbReference type="InParanoid" id="P49637"/>
<dbReference type="OMA" id="WGRVGQH"/>
<dbReference type="OrthoDB" id="61900at2759"/>
<dbReference type="PhylomeDB" id="P49637"/>
<dbReference type="CD-CODE" id="4299E36E">
    <property type="entry name" value="Nucleolus"/>
</dbReference>
<dbReference type="PRO" id="PR:P49637"/>
<dbReference type="Proteomes" id="UP000006548">
    <property type="component" value="Chromosome 1"/>
</dbReference>
<dbReference type="ExpressionAtlas" id="P49637">
    <property type="expression patterns" value="baseline and differential"/>
</dbReference>
<dbReference type="GO" id="GO:0022625">
    <property type="term" value="C:cytosolic large ribosomal subunit"/>
    <property type="evidence" value="ECO:0007005"/>
    <property type="project" value="TAIR"/>
</dbReference>
<dbReference type="GO" id="GO:0022626">
    <property type="term" value="C:cytosolic ribosome"/>
    <property type="evidence" value="ECO:0007005"/>
    <property type="project" value="TAIR"/>
</dbReference>
<dbReference type="GO" id="GO:0005739">
    <property type="term" value="C:mitochondrion"/>
    <property type="evidence" value="ECO:0007005"/>
    <property type="project" value="TAIR"/>
</dbReference>
<dbReference type="GO" id="GO:0009506">
    <property type="term" value="C:plasmodesma"/>
    <property type="evidence" value="ECO:0007005"/>
    <property type="project" value="TAIR"/>
</dbReference>
<dbReference type="GO" id="GO:0003729">
    <property type="term" value="F:mRNA binding"/>
    <property type="evidence" value="ECO:0000314"/>
    <property type="project" value="TAIR"/>
</dbReference>
<dbReference type="GO" id="GO:0003735">
    <property type="term" value="F:structural constituent of ribosome"/>
    <property type="evidence" value="ECO:0000314"/>
    <property type="project" value="CAFA"/>
</dbReference>
<dbReference type="GO" id="GO:0006412">
    <property type="term" value="P:translation"/>
    <property type="evidence" value="ECO:0007669"/>
    <property type="project" value="InterPro"/>
</dbReference>
<dbReference type="FunFam" id="3.100.10.10:FF:000002">
    <property type="entry name" value="60S ribosomal protein L27a"/>
    <property type="match status" value="1"/>
</dbReference>
<dbReference type="Gene3D" id="3.100.10.10">
    <property type="match status" value="1"/>
</dbReference>
<dbReference type="HAMAP" id="MF_01341">
    <property type="entry name" value="Ribosomal_uL15"/>
    <property type="match status" value="1"/>
</dbReference>
<dbReference type="InterPro" id="IPR030878">
    <property type="entry name" value="Ribosomal_uL15"/>
</dbReference>
<dbReference type="InterPro" id="IPR021131">
    <property type="entry name" value="Ribosomal_uL15/eL18"/>
</dbReference>
<dbReference type="InterPro" id="IPR036227">
    <property type="entry name" value="Ribosomal_uL15/eL18_sf"/>
</dbReference>
<dbReference type="InterPro" id="IPR001196">
    <property type="entry name" value="Ribosomal_uL15_CS"/>
</dbReference>
<dbReference type="PANTHER" id="PTHR11721">
    <property type="entry name" value="60S RIBOSOMAL PROTEIN L27A"/>
    <property type="match status" value="1"/>
</dbReference>
<dbReference type="PANTHER" id="PTHR11721:SF3">
    <property type="entry name" value="LARGE RIBOSOMAL SUBUNIT PROTEIN UL15"/>
    <property type="match status" value="1"/>
</dbReference>
<dbReference type="Pfam" id="PF00828">
    <property type="entry name" value="Ribosomal_L27A"/>
    <property type="match status" value="1"/>
</dbReference>
<dbReference type="SUPFAM" id="SSF52080">
    <property type="entry name" value="Ribosomal proteins L15p and L18e"/>
    <property type="match status" value="1"/>
</dbReference>
<dbReference type="PROSITE" id="PS00475">
    <property type="entry name" value="RIBOSOMAL_L15"/>
    <property type="match status" value="1"/>
</dbReference>
<comment type="similarity">
    <text evidence="3">Belongs to the universal ribosomal protein uL15 family.</text>
</comment>
<accession>P49637</accession>
<accession>Q8LE80</accession>
<organism>
    <name type="scientific">Arabidopsis thaliana</name>
    <name type="common">Mouse-ear cress</name>
    <dbReference type="NCBI Taxonomy" id="3702"/>
    <lineage>
        <taxon>Eukaryota</taxon>
        <taxon>Viridiplantae</taxon>
        <taxon>Streptophyta</taxon>
        <taxon>Embryophyta</taxon>
        <taxon>Tracheophyta</taxon>
        <taxon>Spermatophyta</taxon>
        <taxon>Magnoliopsida</taxon>
        <taxon>eudicotyledons</taxon>
        <taxon>Gunneridae</taxon>
        <taxon>Pentapetalae</taxon>
        <taxon>rosids</taxon>
        <taxon>malvids</taxon>
        <taxon>Brassicales</taxon>
        <taxon>Brassicaceae</taxon>
        <taxon>Camelineae</taxon>
        <taxon>Arabidopsis</taxon>
    </lineage>
</organism>